<keyword id="KW-0998">Cell outer membrane</keyword>
<keyword id="KW-0143">Chaperone</keyword>
<keyword id="KW-0449">Lipoprotein</keyword>
<keyword id="KW-0472">Membrane</keyword>
<keyword id="KW-0564">Palmitate</keyword>
<keyword id="KW-0653">Protein transport</keyword>
<keyword id="KW-0732">Signal</keyword>
<keyword id="KW-0813">Transport</keyword>
<dbReference type="EMBL" id="CP001113">
    <property type="protein sequence ID" value="ACF63912.1"/>
    <property type="molecule type" value="Genomic_DNA"/>
</dbReference>
<dbReference type="RefSeq" id="WP_000174484.1">
    <property type="nucleotide sequence ID" value="NZ_CCMR01000003.1"/>
</dbReference>
<dbReference type="SMR" id="B4SUG5"/>
<dbReference type="KEGG" id="see:SNSL254_A1910"/>
<dbReference type="HOGENOM" id="CLU_092816_1_1_6"/>
<dbReference type="Proteomes" id="UP000008824">
    <property type="component" value="Chromosome"/>
</dbReference>
<dbReference type="GO" id="GO:0009279">
    <property type="term" value="C:cell outer membrane"/>
    <property type="evidence" value="ECO:0007669"/>
    <property type="project" value="UniProtKB-SubCell"/>
</dbReference>
<dbReference type="GO" id="GO:0044874">
    <property type="term" value="P:lipoprotein localization to outer membrane"/>
    <property type="evidence" value="ECO:0007669"/>
    <property type="project" value="UniProtKB-UniRule"/>
</dbReference>
<dbReference type="GO" id="GO:0015031">
    <property type="term" value="P:protein transport"/>
    <property type="evidence" value="ECO:0007669"/>
    <property type="project" value="UniProtKB-KW"/>
</dbReference>
<dbReference type="CDD" id="cd16326">
    <property type="entry name" value="LolB"/>
    <property type="match status" value="1"/>
</dbReference>
<dbReference type="FunFam" id="2.50.20.10:FF:000002">
    <property type="entry name" value="Outer-membrane lipoprotein LolB"/>
    <property type="match status" value="1"/>
</dbReference>
<dbReference type="Gene3D" id="2.50.20.10">
    <property type="entry name" value="Lipoprotein localisation LolA/LolB/LppX"/>
    <property type="match status" value="1"/>
</dbReference>
<dbReference type="HAMAP" id="MF_00233">
    <property type="entry name" value="LolB"/>
    <property type="match status" value="1"/>
</dbReference>
<dbReference type="InterPro" id="IPR029046">
    <property type="entry name" value="LolA/LolB/LppX"/>
</dbReference>
<dbReference type="InterPro" id="IPR004565">
    <property type="entry name" value="OM_lipoprot_LolB"/>
</dbReference>
<dbReference type="NCBIfam" id="TIGR00548">
    <property type="entry name" value="lolB"/>
    <property type="match status" value="1"/>
</dbReference>
<dbReference type="Pfam" id="PF03550">
    <property type="entry name" value="LolB"/>
    <property type="match status" value="1"/>
</dbReference>
<dbReference type="SUPFAM" id="SSF89392">
    <property type="entry name" value="Prokaryotic lipoproteins and lipoprotein localization factors"/>
    <property type="match status" value="1"/>
</dbReference>
<dbReference type="PROSITE" id="PS51257">
    <property type="entry name" value="PROKAR_LIPOPROTEIN"/>
    <property type="match status" value="1"/>
</dbReference>
<sequence>MTLPDFRLIRLLPLASLVLTACTLPGHKGPGKSPDSPQWRQHQQEVRHLNQYQTRGAFAYISDDQKVYARFFWQQTGQDRYRLLLTNPLGSTELELNAQPGNVQLVDNKGQRYTADDAEEMIGKLTGMPIPLNSLRQWILGLPGDATDYKLDDQYRLSEVNYRQDGKNWKVVYGGYDSKTQPAMPANMELSDGSQRIKLKMDNWIVK</sequence>
<proteinExistence type="inferred from homology"/>
<name>LOLB_SALNS</name>
<accession>B4SUG5</accession>
<evidence type="ECO:0000255" key="1">
    <source>
        <dbReference type="HAMAP-Rule" id="MF_00233"/>
    </source>
</evidence>
<organism>
    <name type="scientific">Salmonella newport (strain SL254)</name>
    <dbReference type="NCBI Taxonomy" id="423368"/>
    <lineage>
        <taxon>Bacteria</taxon>
        <taxon>Pseudomonadati</taxon>
        <taxon>Pseudomonadota</taxon>
        <taxon>Gammaproteobacteria</taxon>
        <taxon>Enterobacterales</taxon>
        <taxon>Enterobacteriaceae</taxon>
        <taxon>Salmonella</taxon>
    </lineage>
</organism>
<protein>
    <recommendedName>
        <fullName evidence="1">Outer-membrane lipoprotein LolB</fullName>
    </recommendedName>
</protein>
<feature type="signal peptide" evidence="1">
    <location>
        <begin position="1"/>
        <end position="21"/>
    </location>
</feature>
<feature type="chain" id="PRO_1000100507" description="Outer-membrane lipoprotein LolB">
    <location>
        <begin position="22"/>
        <end position="207"/>
    </location>
</feature>
<feature type="lipid moiety-binding region" description="N-palmitoyl cysteine" evidence="1">
    <location>
        <position position="22"/>
    </location>
</feature>
<feature type="lipid moiety-binding region" description="S-diacylglycerol cysteine" evidence="1">
    <location>
        <position position="22"/>
    </location>
</feature>
<gene>
    <name evidence="1" type="primary">lolB</name>
    <name type="ordered locus">SNSL254_A1910</name>
</gene>
<comment type="function">
    <text evidence="1">Plays a critical role in the incorporation of lipoproteins in the outer membrane after they are released by the LolA protein.</text>
</comment>
<comment type="subunit">
    <text evidence="1">Monomer.</text>
</comment>
<comment type="subcellular location">
    <subcellularLocation>
        <location evidence="1">Cell outer membrane</location>
        <topology evidence="1">Lipid-anchor</topology>
    </subcellularLocation>
</comment>
<comment type="similarity">
    <text evidence="1">Belongs to the LolB family.</text>
</comment>
<reference key="1">
    <citation type="journal article" date="2011" name="J. Bacteriol.">
        <title>Comparative genomics of 28 Salmonella enterica isolates: evidence for CRISPR-mediated adaptive sublineage evolution.</title>
        <authorList>
            <person name="Fricke W.F."/>
            <person name="Mammel M.K."/>
            <person name="McDermott P.F."/>
            <person name="Tartera C."/>
            <person name="White D.G."/>
            <person name="Leclerc J.E."/>
            <person name="Ravel J."/>
            <person name="Cebula T.A."/>
        </authorList>
    </citation>
    <scope>NUCLEOTIDE SEQUENCE [LARGE SCALE GENOMIC DNA]</scope>
    <source>
        <strain>SL254</strain>
    </source>
</reference>